<gene>
    <name evidence="1" type="primary">glyA</name>
    <name type="ordered locus">CPF_2184</name>
</gene>
<evidence type="ECO:0000255" key="1">
    <source>
        <dbReference type="HAMAP-Rule" id="MF_00051"/>
    </source>
</evidence>
<protein>
    <recommendedName>
        <fullName evidence="1">Serine hydroxymethyltransferase</fullName>
        <shortName evidence="1">SHMT</shortName>
        <shortName evidence="1">Serine methylase</shortName>
        <ecNumber evidence="1">2.1.2.1</ecNumber>
    </recommendedName>
</protein>
<accession>Q0TP32</accession>
<reference key="1">
    <citation type="journal article" date="2006" name="Genome Res.">
        <title>Skewed genomic variability in strains of the toxigenic bacterial pathogen, Clostridium perfringens.</title>
        <authorList>
            <person name="Myers G.S.A."/>
            <person name="Rasko D.A."/>
            <person name="Cheung J.K."/>
            <person name="Ravel J."/>
            <person name="Seshadri R."/>
            <person name="DeBoy R.T."/>
            <person name="Ren Q."/>
            <person name="Varga J."/>
            <person name="Awad M.M."/>
            <person name="Brinkac L.M."/>
            <person name="Daugherty S.C."/>
            <person name="Haft D.H."/>
            <person name="Dodson R.J."/>
            <person name="Madupu R."/>
            <person name="Nelson W.C."/>
            <person name="Rosovitz M.J."/>
            <person name="Sullivan S.A."/>
            <person name="Khouri H."/>
            <person name="Dimitrov G.I."/>
            <person name="Watkins K.L."/>
            <person name="Mulligan S."/>
            <person name="Benton J."/>
            <person name="Radune D."/>
            <person name="Fisher D.J."/>
            <person name="Atkins H.S."/>
            <person name="Hiscox T."/>
            <person name="Jost B.H."/>
            <person name="Billington S.J."/>
            <person name="Songer J.G."/>
            <person name="McClane B.A."/>
            <person name="Titball R.W."/>
            <person name="Rood J.I."/>
            <person name="Melville S.B."/>
            <person name="Paulsen I.T."/>
        </authorList>
    </citation>
    <scope>NUCLEOTIDE SEQUENCE [LARGE SCALE GENOMIC DNA]</scope>
    <source>
        <strain>ATCC 13124 / DSM 756 / JCM 1290 / NCIMB 6125 / NCTC 8237 / S 107 / Type A</strain>
    </source>
</reference>
<name>GLYA_CLOP1</name>
<keyword id="KW-0028">Amino-acid biosynthesis</keyword>
<keyword id="KW-0963">Cytoplasm</keyword>
<keyword id="KW-0554">One-carbon metabolism</keyword>
<keyword id="KW-0663">Pyridoxal phosphate</keyword>
<keyword id="KW-0808">Transferase</keyword>
<organism>
    <name type="scientific">Clostridium perfringens (strain ATCC 13124 / DSM 756 / JCM 1290 / NCIMB 6125 / NCTC 8237 / Type A)</name>
    <dbReference type="NCBI Taxonomy" id="195103"/>
    <lineage>
        <taxon>Bacteria</taxon>
        <taxon>Bacillati</taxon>
        <taxon>Bacillota</taxon>
        <taxon>Clostridia</taxon>
        <taxon>Eubacteriales</taxon>
        <taxon>Clostridiaceae</taxon>
        <taxon>Clostridium</taxon>
    </lineage>
</organism>
<dbReference type="EC" id="2.1.2.1" evidence="1"/>
<dbReference type="EMBL" id="CP000246">
    <property type="protein sequence ID" value="ABG83577.1"/>
    <property type="molecule type" value="Genomic_DNA"/>
</dbReference>
<dbReference type="RefSeq" id="WP_003468731.1">
    <property type="nucleotide sequence ID" value="NC_008261.1"/>
</dbReference>
<dbReference type="SMR" id="Q0TP32"/>
<dbReference type="STRING" id="195103.CPF_2184"/>
<dbReference type="PaxDb" id="195103-CPF_2184"/>
<dbReference type="GeneID" id="93001535"/>
<dbReference type="KEGG" id="cpf:CPF_2184"/>
<dbReference type="eggNOG" id="COG0112">
    <property type="taxonomic scope" value="Bacteria"/>
</dbReference>
<dbReference type="HOGENOM" id="CLU_022477_2_1_9"/>
<dbReference type="UniPathway" id="UPA00193"/>
<dbReference type="UniPathway" id="UPA00288">
    <property type="reaction ID" value="UER01023"/>
</dbReference>
<dbReference type="Proteomes" id="UP000001823">
    <property type="component" value="Chromosome"/>
</dbReference>
<dbReference type="GO" id="GO:0005829">
    <property type="term" value="C:cytosol"/>
    <property type="evidence" value="ECO:0007669"/>
    <property type="project" value="TreeGrafter"/>
</dbReference>
<dbReference type="GO" id="GO:0004372">
    <property type="term" value="F:glycine hydroxymethyltransferase activity"/>
    <property type="evidence" value="ECO:0007669"/>
    <property type="project" value="UniProtKB-UniRule"/>
</dbReference>
<dbReference type="GO" id="GO:0030170">
    <property type="term" value="F:pyridoxal phosphate binding"/>
    <property type="evidence" value="ECO:0007669"/>
    <property type="project" value="UniProtKB-UniRule"/>
</dbReference>
<dbReference type="GO" id="GO:0019264">
    <property type="term" value="P:glycine biosynthetic process from serine"/>
    <property type="evidence" value="ECO:0007669"/>
    <property type="project" value="UniProtKB-UniRule"/>
</dbReference>
<dbReference type="GO" id="GO:0035999">
    <property type="term" value="P:tetrahydrofolate interconversion"/>
    <property type="evidence" value="ECO:0007669"/>
    <property type="project" value="UniProtKB-UniRule"/>
</dbReference>
<dbReference type="CDD" id="cd00378">
    <property type="entry name" value="SHMT"/>
    <property type="match status" value="1"/>
</dbReference>
<dbReference type="FunFam" id="3.40.640.10:FF:000001">
    <property type="entry name" value="Serine hydroxymethyltransferase"/>
    <property type="match status" value="1"/>
</dbReference>
<dbReference type="FunFam" id="3.90.1150.10:FF:000003">
    <property type="entry name" value="Serine hydroxymethyltransferase"/>
    <property type="match status" value="1"/>
</dbReference>
<dbReference type="Gene3D" id="3.90.1150.10">
    <property type="entry name" value="Aspartate Aminotransferase, domain 1"/>
    <property type="match status" value="1"/>
</dbReference>
<dbReference type="Gene3D" id="3.40.640.10">
    <property type="entry name" value="Type I PLP-dependent aspartate aminotransferase-like (Major domain)"/>
    <property type="match status" value="1"/>
</dbReference>
<dbReference type="HAMAP" id="MF_00051">
    <property type="entry name" value="SHMT"/>
    <property type="match status" value="1"/>
</dbReference>
<dbReference type="InterPro" id="IPR015424">
    <property type="entry name" value="PyrdxlP-dep_Trfase"/>
</dbReference>
<dbReference type="InterPro" id="IPR015421">
    <property type="entry name" value="PyrdxlP-dep_Trfase_major"/>
</dbReference>
<dbReference type="InterPro" id="IPR015422">
    <property type="entry name" value="PyrdxlP-dep_Trfase_small"/>
</dbReference>
<dbReference type="InterPro" id="IPR001085">
    <property type="entry name" value="Ser_HO-MeTrfase"/>
</dbReference>
<dbReference type="InterPro" id="IPR049943">
    <property type="entry name" value="Ser_HO-MeTrfase-like"/>
</dbReference>
<dbReference type="InterPro" id="IPR019798">
    <property type="entry name" value="Ser_HO-MeTrfase_PLP_BS"/>
</dbReference>
<dbReference type="InterPro" id="IPR039429">
    <property type="entry name" value="SHMT-like_dom"/>
</dbReference>
<dbReference type="NCBIfam" id="NF000586">
    <property type="entry name" value="PRK00011.1"/>
    <property type="match status" value="1"/>
</dbReference>
<dbReference type="PANTHER" id="PTHR11680">
    <property type="entry name" value="SERINE HYDROXYMETHYLTRANSFERASE"/>
    <property type="match status" value="1"/>
</dbReference>
<dbReference type="PANTHER" id="PTHR11680:SF35">
    <property type="entry name" value="SERINE HYDROXYMETHYLTRANSFERASE 1"/>
    <property type="match status" value="1"/>
</dbReference>
<dbReference type="Pfam" id="PF00464">
    <property type="entry name" value="SHMT"/>
    <property type="match status" value="1"/>
</dbReference>
<dbReference type="PIRSF" id="PIRSF000412">
    <property type="entry name" value="SHMT"/>
    <property type="match status" value="1"/>
</dbReference>
<dbReference type="SUPFAM" id="SSF53383">
    <property type="entry name" value="PLP-dependent transferases"/>
    <property type="match status" value="1"/>
</dbReference>
<dbReference type="PROSITE" id="PS00096">
    <property type="entry name" value="SHMT"/>
    <property type="match status" value="1"/>
</dbReference>
<comment type="function">
    <text evidence="1">Catalyzes the reversible interconversion of serine and glycine with tetrahydrofolate (THF) serving as the one-carbon carrier. This reaction serves as the major source of one-carbon groups required for the biosynthesis of purines, thymidylate, methionine, and other important biomolecules. Also exhibits THF-independent aldolase activity toward beta-hydroxyamino acids, producing glycine and aldehydes, via a retro-aldol mechanism.</text>
</comment>
<comment type="catalytic activity">
    <reaction evidence="1">
        <text>(6R)-5,10-methylene-5,6,7,8-tetrahydrofolate + glycine + H2O = (6S)-5,6,7,8-tetrahydrofolate + L-serine</text>
        <dbReference type="Rhea" id="RHEA:15481"/>
        <dbReference type="ChEBI" id="CHEBI:15377"/>
        <dbReference type="ChEBI" id="CHEBI:15636"/>
        <dbReference type="ChEBI" id="CHEBI:33384"/>
        <dbReference type="ChEBI" id="CHEBI:57305"/>
        <dbReference type="ChEBI" id="CHEBI:57453"/>
        <dbReference type="EC" id="2.1.2.1"/>
    </reaction>
</comment>
<comment type="cofactor">
    <cofactor evidence="1">
        <name>pyridoxal 5'-phosphate</name>
        <dbReference type="ChEBI" id="CHEBI:597326"/>
    </cofactor>
</comment>
<comment type="pathway">
    <text evidence="1">One-carbon metabolism; tetrahydrofolate interconversion.</text>
</comment>
<comment type="pathway">
    <text evidence="1">Amino-acid biosynthesis; glycine biosynthesis; glycine from L-serine: step 1/1.</text>
</comment>
<comment type="subunit">
    <text evidence="1">Homodimer.</text>
</comment>
<comment type="subcellular location">
    <subcellularLocation>
        <location evidence="1">Cytoplasm</location>
    </subcellularLocation>
</comment>
<comment type="similarity">
    <text evidence="1">Belongs to the SHMT family.</text>
</comment>
<proteinExistence type="inferred from homology"/>
<feature type="chain" id="PRO_1000006240" description="Serine hydroxymethyltransferase">
    <location>
        <begin position="1"/>
        <end position="410"/>
    </location>
</feature>
<feature type="binding site" evidence="1">
    <location>
        <position position="119"/>
    </location>
    <ligand>
        <name>(6S)-5,6,7,8-tetrahydrofolate</name>
        <dbReference type="ChEBI" id="CHEBI:57453"/>
    </ligand>
</feature>
<feature type="binding site" evidence="1">
    <location>
        <begin position="123"/>
        <end position="125"/>
    </location>
    <ligand>
        <name>(6S)-5,6,7,8-tetrahydrofolate</name>
        <dbReference type="ChEBI" id="CHEBI:57453"/>
    </ligand>
</feature>
<feature type="binding site" evidence="1">
    <location>
        <begin position="351"/>
        <end position="353"/>
    </location>
    <ligand>
        <name>(6S)-5,6,7,8-tetrahydrofolate</name>
        <dbReference type="ChEBI" id="CHEBI:57453"/>
    </ligand>
</feature>
<feature type="site" description="Plays an important role in substrate specificity" evidence="1">
    <location>
        <position position="227"/>
    </location>
</feature>
<feature type="modified residue" description="N6-(pyridoxal phosphate)lysine" evidence="1">
    <location>
        <position position="228"/>
    </location>
</feature>
<sequence length="410" mass="45187">MNFDNLEREDEQIAHLVQKEKERQENSIELIASENFVSKAVMEAMGSYLTNKYAEGYPSKRYYGGCHVVDEVEDLARERVKKLFGAEHANVQPHSGSQANMAVYFSILEPGDTVLGMDLSHGGHLTHGSPVNFSGRLFNFVSYGVDKETETINYETVRELALKHKPKLIVAGASAYSRIIDFKTLREIADEVGAYLMVDIAHIAGLVATGLHPSPVPYADFVTSTTHKTLRGPRGGLILCKEKFAKALDKNIFPGIQGGPLMHIIAAKAVCFKEALEPSFKTYMEQVVKNAHVLAEALESYGFKLVSNGTDNHLILVDLTNKDITGKDAEILLDSIGITLNKNTVPNETRSPFVTSGVRIGTPAITTRGFKEEEMKEIASIINDAIKEKDGDLEPLKARVKALCAKYPLY</sequence>